<proteinExistence type="evidence at protein level"/>
<reference key="1">
    <citation type="journal article" date="2001" name="Mamm. Genome">
        <title>Comparative analysis of aryl-hydrocarbon receptor interacting protein-like 1 (Aipl1), a gene associated with inherited retinal disease in humans.</title>
        <authorList>
            <person name="Sohocki M.M."/>
            <person name="Sullivan L.S."/>
            <person name="Tirpak D.L."/>
            <person name="Daiger S.P."/>
        </authorList>
    </citation>
    <scope>NUCLEOTIDE SEQUENCE [MRNA]</scope>
</reference>
<reference key="2">
    <citation type="journal article" date="2009" name="PLoS Biol.">
        <title>Lineage-specific biology revealed by a finished genome assembly of the mouse.</title>
        <authorList>
            <person name="Church D.M."/>
            <person name="Goodstadt L."/>
            <person name="Hillier L.W."/>
            <person name="Zody M.C."/>
            <person name="Goldstein S."/>
            <person name="She X."/>
            <person name="Bult C.J."/>
            <person name="Agarwala R."/>
            <person name="Cherry J.L."/>
            <person name="DiCuccio M."/>
            <person name="Hlavina W."/>
            <person name="Kapustin Y."/>
            <person name="Meric P."/>
            <person name="Maglott D."/>
            <person name="Birtle Z."/>
            <person name="Marques A.C."/>
            <person name="Graves T."/>
            <person name="Zhou S."/>
            <person name="Teague B."/>
            <person name="Potamousis K."/>
            <person name="Churas C."/>
            <person name="Place M."/>
            <person name="Herschleb J."/>
            <person name="Runnheim R."/>
            <person name="Forrest D."/>
            <person name="Amos-Landgraf J."/>
            <person name="Schwartz D.C."/>
            <person name="Cheng Z."/>
            <person name="Lindblad-Toh K."/>
            <person name="Eichler E.E."/>
            <person name="Ponting C.P."/>
        </authorList>
    </citation>
    <scope>NUCLEOTIDE SEQUENCE [LARGE SCALE GENOMIC DNA]</scope>
    <source>
        <strain>C57BL/6J</strain>
    </source>
</reference>
<reference key="3">
    <citation type="submission" date="2005-07" db="EMBL/GenBank/DDBJ databases">
        <authorList>
            <person name="Mural R.J."/>
            <person name="Adams M.D."/>
            <person name="Myers E.W."/>
            <person name="Smith H.O."/>
            <person name="Venter J.C."/>
        </authorList>
    </citation>
    <scope>NUCLEOTIDE SEQUENCE [LARGE SCALE GENOMIC DNA]</scope>
</reference>
<feature type="chain" id="PRO_0000075344" description="Aryl-hydrocarbon-interacting protein-like 1">
    <location>
        <begin position="1"/>
        <end position="328"/>
    </location>
</feature>
<feature type="domain" description="PPIase FKBP-type">
    <location>
        <begin position="53"/>
        <end position="145"/>
    </location>
</feature>
<feature type="repeat" description="TPR 1">
    <location>
        <begin position="178"/>
        <end position="211"/>
    </location>
</feature>
<feature type="repeat" description="TPR 2">
    <location>
        <begin position="230"/>
        <end position="263"/>
    </location>
</feature>
<feature type="repeat" description="TPR 3">
    <location>
        <begin position="264"/>
        <end position="297"/>
    </location>
</feature>
<feature type="sequence conflict" description="In Ref. 1; AAK77956." evidence="2" ref="1">
    <original>S</original>
    <variation>N</variation>
    <location>
        <position position="26"/>
    </location>
</feature>
<feature type="sequence conflict" description="In Ref. 1; AAK77956." evidence="2" ref="1">
    <original>D</original>
    <variation>E</variation>
    <location>
        <position position="44"/>
    </location>
</feature>
<feature type="sequence conflict" description="In Ref. 1; AAK77956." evidence="2" ref="1">
    <original>I</original>
    <variation>Y</variation>
    <location>
        <position position="151"/>
    </location>
</feature>
<sequence length="328" mass="38212">MDVSLLLNVEGVKKTILHGGTGELPSFITGSRVTFHFRTMKCDDERTVIDDSKQVGQPMSIIIGNMFKLEVWETLLTSMRLGEVAEFWCDTIHTGVYPMLSRSLRQVAEGKDPTSWHVHTCGLANMFAYHTLGYEDLDELQKEPQPLVFLIELLQVEAPNEYQRETWNLNNEERMQAVPLLHGEGNRLYKLGRYDQAATKYQEAIVCLRNLQTKEKPWEVEWLKLEKMINTLILNYCQCLLKKEEYYEVLEHTSDILRHHPGIVKAYYMRARAHAEVWNAEEAKADLEKVLELEPSMRKAVLRELRLLESRLADKQEEERQRCRSMLG</sequence>
<gene>
    <name type="primary">Aipl1</name>
</gene>
<accession>Q924K1</accession>
<accession>Q5RI54</accession>
<evidence type="ECO:0000250" key="1"/>
<evidence type="ECO:0000305" key="2"/>
<comment type="function">
    <text evidence="1">May be important in protein trafficking and/or protein folding and stabilization.</text>
</comment>
<comment type="subunit">
    <text evidence="1">Interacts with NUB1.</text>
</comment>
<comment type="subcellular location">
    <subcellularLocation>
        <location evidence="1">Cytoplasm</location>
    </subcellularLocation>
    <subcellularLocation>
        <location evidence="1">Nucleus</location>
    </subcellularLocation>
</comment>
<dbReference type="EMBL" id="AF296412">
    <property type="protein sequence ID" value="AAK77956.1"/>
    <property type="molecule type" value="mRNA"/>
</dbReference>
<dbReference type="EMBL" id="BX321917">
    <property type="status" value="NOT_ANNOTATED_CDS"/>
    <property type="molecule type" value="Genomic_DNA"/>
</dbReference>
<dbReference type="EMBL" id="CH466596">
    <property type="protein sequence ID" value="EDL12655.1"/>
    <property type="molecule type" value="Genomic_DNA"/>
</dbReference>
<dbReference type="CCDS" id="CCDS24976.1"/>
<dbReference type="RefSeq" id="NP_444475.2">
    <property type="nucleotide sequence ID" value="NM_053245.2"/>
</dbReference>
<dbReference type="RefSeq" id="XP_030101336.1">
    <property type="nucleotide sequence ID" value="XM_030245476.2"/>
</dbReference>
<dbReference type="RefSeq" id="XP_030101337.1">
    <property type="nucleotide sequence ID" value="XM_030245477.2"/>
</dbReference>
<dbReference type="PDB" id="8EOA">
    <property type="method" value="EM"/>
    <property type="resolution" value="3.90 A"/>
    <property type="chains" value="C=1-328"/>
</dbReference>
<dbReference type="PDBsum" id="8EOA"/>
<dbReference type="EMDB" id="EMD-28332"/>
<dbReference type="SMR" id="Q924K1"/>
<dbReference type="CORUM" id="Q924K1"/>
<dbReference type="FunCoup" id="Q924K1">
    <property type="interactions" value="864"/>
</dbReference>
<dbReference type="IntAct" id="Q924K1">
    <property type="interactions" value="1"/>
</dbReference>
<dbReference type="STRING" id="10090.ENSMUSP00000036279"/>
<dbReference type="PhosphoSitePlus" id="Q924K1"/>
<dbReference type="PaxDb" id="10090-ENSMUSP00000036279"/>
<dbReference type="ProteomicsDB" id="296008"/>
<dbReference type="Antibodypedia" id="23762">
    <property type="antibodies" value="372 antibodies from 33 providers"/>
</dbReference>
<dbReference type="DNASU" id="114230"/>
<dbReference type="Ensembl" id="ENSMUST00000048207.10">
    <property type="protein sequence ID" value="ENSMUSP00000036279.4"/>
    <property type="gene ID" value="ENSMUSG00000040554.11"/>
</dbReference>
<dbReference type="GeneID" id="114230"/>
<dbReference type="KEGG" id="mmu:114230"/>
<dbReference type="UCSC" id="uc007jxy.2">
    <property type="organism name" value="mouse"/>
</dbReference>
<dbReference type="AGR" id="MGI:2148800"/>
<dbReference type="CTD" id="23746"/>
<dbReference type="MGI" id="MGI:2148800">
    <property type="gene designation" value="Aipl1"/>
</dbReference>
<dbReference type="VEuPathDB" id="HostDB:ENSMUSG00000040554"/>
<dbReference type="eggNOG" id="KOG0545">
    <property type="taxonomic scope" value="Eukaryota"/>
</dbReference>
<dbReference type="GeneTree" id="ENSGT00390000001289"/>
<dbReference type="HOGENOM" id="CLU_052244_0_0_1"/>
<dbReference type="InParanoid" id="Q924K1"/>
<dbReference type="OMA" id="EYDRETW"/>
<dbReference type="OrthoDB" id="5829758at2759"/>
<dbReference type="PhylomeDB" id="Q924K1"/>
<dbReference type="TreeFam" id="TF314507"/>
<dbReference type="BioGRID-ORCS" id="114230">
    <property type="hits" value="5 hits in 79 CRISPR screens"/>
</dbReference>
<dbReference type="PRO" id="PR:Q924K1"/>
<dbReference type="Proteomes" id="UP000000589">
    <property type="component" value="Chromosome 11"/>
</dbReference>
<dbReference type="RNAct" id="Q924K1">
    <property type="molecule type" value="protein"/>
</dbReference>
<dbReference type="Bgee" id="ENSMUSG00000040554">
    <property type="expression patterns" value="Expressed in retinal neural layer and 16 other cell types or tissues"/>
</dbReference>
<dbReference type="ExpressionAtlas" id="Q924K1">
    <property type="expression patterns" value="baseline and differential"/>
</dbReference>
<dbReference type="GO" id="GO:0005737">
    <property type="term" value="C:cytoplasm"/>
    <property type="evidence" value="ECO:0000266"/>
    <property type="project" value="MGI"/>
</dbReference>
<dbReference type="GO" id="GO:0005829">
    <property type="term" value="C:cytosol"/>
    <property type="evidence" value="ECO:0007669"/>
    <property type="project" value="Ensembl"/>
</dbReference>
<dbReference type="GO" id="GO:0016607">
    <property type="term" value="C:nuclear speck"/>
    <property type="evidence" value="ECO:0007669"/>
    <property type="project" value="Ensembl"/>
</dbReference>
<dbReference type="GO" id="GO:0005634">
    <property type="term" value="C:nucleus"/>
    <property type="evidence" value="ECO:0000266"/>
    <property type="project" value="MGI"/>
</dbReference>
<dbReference type="GO" id="GO:0001917">
    <property type="term" value="C:photoreceptor inner segment"/>
    <property type="evidence" value="ECO:0000314"/>
    <property type="project" value="MGI"/>
</dbReference>
<dbReference type="GO" id="GO:0001918">
    <property type="term" value="F:farnesylated protein binding"/>
    <property type="evidence" value="ECO:0000266"/>
    <property type="project" value="MGI"/>
</dbReference>
<dbReference type="GO" id="GO:0003755">
    <property type="term" value="F:peptidyl-prolyl cis-trans isomerase activity"/>
    <property type="evidence" value="ECO:0007669"/>
    <property type="project" value="InterPro"/>
</dbReference>
<dbReference type="GO" id="GO:0006915">
    <property type="term" value="P:apoptotic process"/>
    <property type="evidence" value="ECO:0000315"/>
    <property type="project" value="MGI"/>
</dbReference>
<dbReference type="GO" id="GO:0043066">
    <property type="term" value="P:negative regulation of apoptotic process"/>
    <property type="evidence" value="ECO:0000315"/>
    <property type="project" value="MGI"/>
</dbReference>
<dbReference type="GO" id="GO:0007603">
    <property type="term" value="P:phototransduction, visible light"/>
    <property type="evidence" value="ECO:0000315"/>
    <property type="project" value="MGI"/>
</dbReference>
<dbReference type="GO" id="GO:0022400">
    <property type="term" value="P:regulation of opsin-mediated signaling pathway"/>
    <property type="evidence" value="ECO:0000315"/>
    <property type="project" value="MGI"/>
</dbReference>
<dbReference type="GO" id="GO:0001895">
    <property type="term" value="P:retina homeostasis"/>
    <property type="evidence" value="ECO:0000315"/>
    <property type="project" value="MGI"/>
</dbReference>
<dbReference type="FunFam" id="1.25.40.10:FF:000052">
    <property type="entry name" value="Aryl-hydrocarbon-interacting protein-like 1"/>
    <property type="match status" value="1"/>
</dbReference>
<dbReference type="FunFam" id="3.10.50.40:FF:000018">
    <property type="entry name" value="Aryl-hydrocarbon-interacting protein-like 1"/>
    <property type="match status" value="1"/>
</dbReference>
<dbReference type="Gene3D" id="3.10.50.40">
    <property type="match status" value="1"/>
</dbReference>
<dbReference type="Gene3D" id="1.25.40.10">
    <property type="entry name" value="Tetratricopeptide repeat domain"/>
    <property type="match status" value="1"/>
</dbReference>
<dbReference type="InterPro" id="IPR039663">
    <property type="entry name" value="AIP/AIPL1/TTC9"/>
</dbReference>
<dbReference type="InterPro" id="IPR056277">
    <property type="entry name" value="PPIase_AIP"/>
</dbReference>
<dbReference type="InterPro" id="IPR046357">
    <property type="entry name" value="PPIase_dom_sf"/>
</dbReference>
<dbReference type="InterPro" id="IPR011990">
    <property type="entry name" value="TPR-like_helical_dom_sf"/>
</dbReference>
<dbReference type="InterPro" id="IPR019734">
    <property type="entry name" value="TPR_rpt"/>
</dbReference>
<dbReference type="PANTHER" id="PTHR11242">
    <property type="entry name" value="ARYL HYDROCARBON RECEPTOR INTERACTING PROTEIN RELATED"/>
    <property type="match status" value="1"/>
</dbReference>
<dbReference type="PANTHER" id="PTHR11242:SF2">
    <property type="entry name" value="ARYL-HYDROCARBON-INTERACTING PROTEIN-LIKE 1"/>
    <property type="match status" value="1"/>
</dbReference>
<dbReference type="Pfam" id="PF23322">
    <property type="entry name" value="PPIase_AIP"/>
    <property type="match status" value="1"/>
</dbReference>
<dbReference type="SMART" id="SM00028">
    <property type="entry name" value="TPR"/>
    <property type="match status" value="2"/>
</dbReference>
<dbReference type="SUPFAM" id="SSF54534">
    <property type="entry name" value="FKBP-like"/>
    <property type="match status" value="1"/>
</dbReference>
<dbReference type="SUPFAM" id="SSF48452">
    <property type="entry name" value="TPR-like"/>
    <property type="match status" value="1"/>
</dbReference>
<dbReference type="PROSITE" id="PS50005">
    <property type="entry name" value="TPR"/>
    <property type="match status" value="2"/>
</dbReference>
<dbReference type="PROSITE" id="PS50293">
    <property type="entry name" value="TPR_REGION"/>
    <property type="match status" value="2"/>
</dbReference>
<organism>
    <name type="scientific">Mus musculus</name>
    <name type="common">Mouse</name>
    <dbReference type="NCBI Taxonomy" id="10090"/>
    <lineage>
        <taxon>Eukaryota</taxon>
        <taxon>Metazoa</taxon>
        <taxon>Chordata</taxon>
        <taxon>Craniata</taxon>
        <taxon>Vertebrata</taxon>
        <taxon>Euteleostomi</taxon>
        <taxon>Mammalia</taxon>
        <taxon>Eutheria</taxon>
        <taxon>Euarchontoglires</taxon>
        <taxon>Glires</taxon>
        <taxon>Rodentia</taxon>
        <taxon>Myomorpha</taxon>
        <taxon>Muroidea</taxon>
        <taxon>Muridae</taxon>
        <taxon>Murinae</taxon>
        <taxon>Mus</taxon>
        <taxon>Mus</taxon>
    </lineage>
</organism>
<protein>
    <recommendedName>
        <fullName>Aryl-hydrocarbon-interacting protein-like 1</fullName>
    </recommendedName>
</protein>
<name>AIPL1_MOUSE</name>
<keyword id="KW-0002">3D-structure</keyword>
<keyword id="KW-0963">Cytoplasm</keyword>
<keyword id="KW-0539">Nucleus</keyword>
<keyword id="KW-1185">Reference proteome</keyword>
<keyword id="KW-0677">Repeat</keyword>
<keyword id="KW-0802">TPR repeat</keyword>